<keyword id="KW-0687">Ribonucleoprotein</keyword>
<keyword id="KW-0689">Ribosomal protein</keyword>
<keyword id="KW-0694">RNA-binding</keyword>
<keyword id="KW-0699">rRNA-binding</keyword>
<accession>A9W4Q2</accession>
<name>RL4_METEP</name>
<protein>
    <recommendedName>
        <fullName evidence="1">Large ribosomal subunit protein uL4</fullName>
    </recommendedName>
    <alternativeName>
        <fullName evidence="2">50S ribosomal protein L4</fullName>
    </alternativeName>
</protein>
<dbReference type="EMBL" id="CP000908">
    <property type="protein sequence ID" value="ABY30558.1"/>
    <property type="molecule type" value="Genomic_DNA"/>
</dbReference>
<dbReference type="RefSeq" id="WP_003597092.1">
    <property type="nucleotide sequence ID" value="NC_010172.1"/>
</dbReference>
<dbReference type="SMR" id="A9W4Q2"/>
<dbReference type="GeneID" id="72989851"/>
<dbReference type="KEGG" id="mex:Mext_2163"/>
<dbReference type="eggNOG" id="COG0088">
    <property type="taxonomic scope" value="Bacteria"/>
</dbReference>
<dbReference type="HOGENOM" id="CLU_041575_5_1_5"/>
<dbReference type="BioCyc" id="MEXT419610:MEXT_RS10920-MONOMER"/>
<dbReference type="GO" id="GO:1990904">
    <property type="term" value="C:ribonucleoprotein complex"/>
    <property type="evidence" value="ECO:0007669"/>
    <property type="project" value="UniProtKB-KW"/>
</dbReference>
<dbReference type="GO" id="GO:0005840">
    <property type="term" value="C:ribosome"/>
    <property type="evidence" value="ECO:0007669"/>
    <property type="project" value="UniProtKB-KW"/>
</dbReference>
<dbReference type="GO" id="GO:0019843">
    <property type="term" value="F:rRNA binding"/>
    <property type="evidence" value="ECO:0007669"/>
    <property type="project" value="UniProtKB-UniRule"/>
</dbReference>
<dbReference type="GO" id="GO:0003735">
    <property type="term" value="F:structural constituent of ribosome"/>
    <property type="evidence" value="ECO:0007669"/>
    <property type="project" value="InterPro"/>
</dbReference>
<dbReference type="GO" id="GO:0006412">
    <property type="term" value="P:translation"/>
    <property type="evidence" value="ECO:0007669"/>
    <property type="project" value="UniProtKB-UniRule"/>
</dbReference>
<dbReference type="Gene3D" id="3.40.1370.10">
    <property type="match status" value="1"/>
</dbReference>
<dbReference type="HAMAP" id="MF_01328_B">
    <property type="entry name" value="Ribosomal_uL4_B"/>
    <property type="match status" value="1"/>
</dbReference>
<dbReference type="InterPro" id="IPR002136">
    <property type="entry name" value="Ribosomal_uL4"/>
</dbReference>
<dbReference type="InterPro" id="IPR013005">
    <property type="entry name" value="Ribosomal_uL4-like"/>
</dbReference>
<dbReference type="InterPro" id="IPR023574">
    <property type="entry name" value="Ribosomal_uL4_dom_sf"/>
</dbReference>
<dbReference type="NCBIfam" id="TIGR03953">
    <property type="entry name" value="rplD_bact"/>
    <property type="match status" value="1"/>
</dbReference>
<dbReference type="PANTHER" id="PTHR10746">
    <property type="entry name" value="50S RIBOSOMAL PROTEIN L4"/>
    <property type="match status" value="1"/>
</dbReference>
<dbReference type="PANTHER" id="PTHR10746:SF6">
    <property type="entry name" value="LARGE RIBOSOMAL SUBUNIT PROTEIN UL4M"/>
    <property type="match status" value="1"/>
</dbReference>
<dbReference type="Pfam" id="PF00573">
    <property type="entry name" value="Ribosomal_L4"/>
    <property type="match status" value="1"/>
</dbReference>
<dbReference type="SUPFAM" id="SSF52166">
    <property type="entry name" value="Ribosomal protein L4"/>
    <property type="match status" value="1"/>
</dbReference>
<organism>
    <name type="scientific">Methylorubrum extorquens (strain PA1)</name>
    <name type="common">Methylobacterium extorquens</name>
    <dbReference type="NCBI Taxonomy" id="419610"/>
    <lineage>
        <taxon>Bacteria</taxon>
        <taxon>Pseudomonadati</taxon>
        <taxon>Pseudomonadota</taxon>
        <taxon>Alphaproteobacteria</taxon>
        <taxon>Hyphomicrobiales</taxon>
        <taxon>Methylobacteriaceae</taxon>
        <taxon>Methylorubrum</taxon>
    </lineage>
</organism>
<evidence type="ECO:0000255" key="1">
    <source>
        <dbReference type="HAMAP-Rule" id="MF_01328"/>
    </source>
</evidence>
<evidence type="ECO:0000305" key="2"/>
<feature type="chain" id="PRO_1000142148" description="Large ribosomal subunit protein uL4">
    <location>
        <begin position="1"/>
        <end position="206"/>
    </location>
</feature>
<gene>
    <name evidence="1" type="primary">rplD</name>
    <name type="ordered locus">Mext_2163</name>
</gene>
<reference key="1">
    <citation type="submission" date="2007-12" db="EMBL/GenBank/DDBJ databases">
        <title>Complete sequence of Methylobacterium extorquens PA1.</title>
        <authorList>
            <consortium name="US DOE Joint Genome Institute"/>
            <person name="Copeland A."/>
            <person name="Lucas S."/>
            <person name="Lapidus A."/>
            <person name="Barry K."/>
            <person name="Glavina del Rio T."/>
            <person name="Dalin E."/>
            <person name="Tice H."/>
            <person name="Pitluck S."/>
            <person name="Saunders E."/>
            <person name="Brettin T."/>
            <person name="Bruce D."/>
            <person name="Detter J.C."/>
            <person name="Han C."/>
            <person name="Schmutz J."/>
            <person name="Larimer F."/>
            <person name="Land M."/>
            <person name="Hauser L."/>
            <person name="Kyrpides N."/>
            <person name="Kim E."/>
            <person name="Marx C."/>
            <person name="Richardson P."/>
        </authorList>
    </citation>
    <scope>NUCLEOTIDE SEQUENCE [LARGE SCALE GENOMIC DNA]</scope>
    <source>
        <strain>PA1</strain>
    </source>
</reference>
<sequence>MKLDITTLDGGSAGSVELNEAIYGLEPRADILQRMVRYQLAKRRAGTHAVKNRSDVDRTSKKLYKQKGTGNARHGAASAPQFRGGGRAFGPVVRDHSHDLPKKVRALALKHALSAKAKASTLIVVDDIKVDNHKTKAMIERFEKLGLSSALIIGGSEVDENFGRAARAIPKIDVLPVQGINVYDILRRDTLVLTRAAVDALEERFK</sequence>
<comment type="function">
    <text evidence="1">One of the primary rRNA binding proteins, this protein initially binds near the 5'-end of the 23S rRNA. It is important during the early stages of 50S assembly. It makes multiple contacts with different domains of the 23S rRNA in the assembled 50S subunit and ribosome.</text>
</comment>
<comment type="function">
    <text evidence="1">Forms part of the polypeptide exit tunnel.</text>
</comment>
<comment type="subunit">
    <text evidence="1">Part of the 50S ribosomal subunit.</text>
</comment>
<comment type="similarity">
    <text evidence="1">Belongs to the universal ribosomal protein uL4 family.</text>
</comment>
<proteinExistence type="inferred from homology"/>